<feature type="chain" id="PRO_0000293245" description="Small ribosomal subunit protein uS4B">
    <location>
        <begin position="1"/>
        <end position="208"/>
    </location>
</feature>
<feature type="domain" description="S4 RNA-binding" evidence="1">
    <location>
        <begin position="95"/>
        <end position="160"/>
    </location>
</feature>
<protein>
    <recommendedName>
        <fullName evidence="1">Small ribosomal subunit protein uS4B</fullName>
    </recommendedName>
    <alternativeName>
        <fullName evidence="2">30S ribosomal protein S4 2</fullName>
    </alternativeName>
</protein>
<accession>Q6MIP0</accession>
<keyword id="KW-1185">Reference proteome</keyword>
<keyword id="KW-0687">Ribonucleoprotein</keyword>
<keyword id="KW-0689">Ribosomal protein</keyword>
<keyword id="KW-0694">RNA-binding</keyword>
<keyword id="KW-0699">rRNA-binding</keyword>
<evidence type="ECO:0000255" key="1">
    <source>
        <dbReference type="HAMAP-Rule" id="MF_01306"/>
    </source>
</evidence>
<evidence type="ECO:0000305" key="2"/>
<dbReference type="EMBL" id="BX842654">
    <property type="protein sequence ID" value="CAE80873.1"/>
    <property type="molecule type" value="Genomic_DNA"/>
</dbReference>
<dbReference type="RefSeq" id="WP_011165477.1">
    <property type="nucleotide sequence ID" value="NC_005363.1"/>
</dbReference>
<dbReference type="SMR" id="Q6MIP0"/>
<dbReference type="STRING" id="264462.Bd3112"/>
<dbReference type="GeneID" id="93013963"/>
<dbReference type="KEGG" id="bba:Bd3112"/>
<dbReference type="eggNOG" id="COG0522">
    <property type="taxonomic scope" value="Bacteria"/>
</dbReference>
<dbReference type="HOGENOM" id="CLU_092403_0_0_7"/>
<dbReference type="Proteomes" id="UP000008080">
    <property type="component" value="Chromosome"/>
</dbReference>
<dbReference type="GO" id="GO:0015935">
    <property type="term" value="C:small ribosomal subunit"/>
    <property type="evidence" value="ECO:0007669"/>
    <property type="project" value="InterPro"/>
</dbReference>
<dbReference type="GO" id="GO:0019843">
    <property type="term" value="F:rRNA binding"/>
    <property type="evidence" value="ECO:0007669"/>
    <property type="project" value="UniProtKB-UniRule"/>
</dbReference>
<dbReference type="GO" id="GO:0003735">
    <property type="term" value="F:structural constituent of ribosome"/>
    <property type="evidence" value="ECO:0007669"/>
    <property type="project" value="InterPro"/>
</dbReference>
<dbReference type="GO" id="GO:0042274">
    <property type="term" value="P:ribosomal small subunit biogenesis"/>
    <property type="evidence" value="ECO:0007669"/>
    <property type="project" value="TreeGrafter"/>
</dbReference>
<dbReference type="GO" id="GO:0006412">
    <property type="term" value="P:translation"/>
    <property type="evidence" value="ECO:0007669"/>
    <property type="project" value="UniProtKB-UniRule"/>
</dbReference>
<dbReference type="CDD" id="cd00165">
    <property type="entry name" value="S4"/>
    <property type="match status" value="1"/>
</dbReference>
<dbReference type="FunFam" id="3.10.290.10:FF:000001">
    <property type="entry name" value="30S ribosomal protein S4"/>
    <property type="match status" value="1"/>
</dbReference>
<dbReference type="Gene3D" id="1.10.1050.10">
    <property type="entry name" value="Ribosomal Protein S4 Delta 41, Chain A, domain 1"/>
    <property type="match status" value="1"/>
</dbReference>
<dbReference type="Gene3D" id="3.10.290.10">
    <property type="entry name" value="RNA-binding S4 domain"/>
    <property type="match status" value="1"/>
</dbReference>
<dbReference type="HAMAP" id="MF_01306_B">
    <property type="entry name" value="Ribosomal_uS4_B"/>
    <property type="match status" value="1"/>
</dbReference>
<dbReference type="InterPro" id="IPR022801">
    <property type="entry name" value="Ribosomal_uS4"/>
</dbReference>
<dbReference type="InterPro" id="IPR005709">
    <property type="entry name" value="Ribosomal_uS4_bac-type"/>
</dbReference>
<dbReference type="InterPro" id="IPR018079">
    <property type="entry name" value="Ribosomal_uS4_CS"/>
</dbReference>
<dbReference type="InterPro" id="IPR001912">
    <property type="entry name" value="Ribosomal_uS4_N"/>
</dbReference>
<dbReference type="InterPro" id="IPR002942">
    <property type="entry name" value="S4_RNA-bd"/>
</dbReference>
<dbReference type="InterPro" id="IPR036986">
    <property type="entry name" value="S4_RNA-bd_sf"/>
</dbReference>
<dbReference type="NCBIfam" id="NF003717">
    <property type="entry name" value="PRK05327.1"/>
    <property type="match status" value="1"/>
</dbReference>
<dbReference type="NCBIfam" id="TIGR01017">
    <property type="entry name" value="rpsD_bact"/>
    <property type="match status" value="1"/>
</dbReference>
<dbReference type="PANTHER" id="PTHR11831">
    <property type="entry name" value="30S 40S RIBOSOMAL PROTEIN"/>
    <property type="match status" value="1"/>
</dbReference>
<dbReference type="PANTHER" id="PTHR11831:SF4">
    <property type="entry name" value="SMALL RIBOSOMAL SUBUNIT PROTEIN US4M"/>
    <property type="match status" value="1"/>
</dbReference>
<dbReference type="Pfam" id="PF00163">
    <property type="entry name" value="Ribosomal_S4"/>
    <property type="match status" value="1"/>
</dbReference>
<dbReference type="Pfam" id="PF01479">
    <property type="entry name" value="S4"/>
    <property type="match status" value="1"/>
</dbReference>
<dbReference type="SMART" id="SM01390">
    <property type="entry name" value="Ribosomal_S4"/>
    <property type="match status" value="1"/>
</dbReference>
<dbReference type="SMART" id="SM00363">
    <property type="entry name" value="S4"/>
    <property type="match status" value="1"/>
</dbReference>
<dbReference type="SUPFAM" id="SSF55174">
    <property type="entry name" value="Alpha-L RNA-binding motif"/>
    <property type="match status" value="1"/>
</dbReference>
<dbReference type="PROSITE" id="PS00632">
    <property type="entry name" value="RIBOSOMAL_S4"/>
    <property type="match status" value="1"/>
</dbReference>
<dbReference type="PROSITE" id="PS50889">
    <property type="entry name" value="S4"/>
    <property type="match status" value="1"/>
</dbReference>
<reference key="1">
    <citation type="journal article" date="2004" name="Science">
        <title>A predator unmasked: life cycle of Bdellovibrio bacteriovorus from a genomic perspective.</title>
        <authorList>
            <person name="Rendulic S."/>
            <person name="Jagtap P."/>
            <person name="Rosinus A."/>
            <person name="Eppinger M."/>
            <person name="Baar C."/>
            <person name="Lanz C."/>
            <person name="Keller H."/>
            <person name="Lambert C."/>
            <person name="Evans K.J."/>
            <person name="Goesmann A."/>
            <person name="Meyer F."/>
            <person name="Sockett R.E."/>
            <person name="Schuster S.C."/>
        </authorList>
    </citation>
    <scope>NUCLEOTIDE SEQUENCE [LARGE SCALE GENOMIC DNA]</scope>
    <source>
        <strain>ATCC 15356 / DSM 50701 / NCIMB 9529 / HD100</strain>
    </source>
</reference>
<proteinExistence type="inferred from homology"/>
<comment type="function">
    <text evidence="1">One of the primary rRNA binding proteins, it binds directly to 16S rRNA where it nucleates assembly of the body of the 30S subunit.</text>
</comment>
<comment type="function">
    <text evidence="1">With S5 and S12 plays an important role in translational accuracy.</text>
</comment>
<comment type="subunit">
    <text evidence="1">Part of the 30S ribosomal subunit. Contacts protein S5. The interaction surface between S4 and S5 is involved in control of translational fidelity.</text>
</comment>
<comment type="similarity">
    <text evidence="1">Belongs to the universal ribosomal protein uS4 family.</text>
</comment>
<gene>
    <name evidence="1" type="primary">rpsD2</name>
    <name type="ordered locus">Bd3112</name>
</gene>
<sequence>MNRQGKTPRFKRQRRLLTELPGMGKAGALERRPYPPGQHGLQRRKYSEFALQLEEKQKLRFHYGLREEQFRRLINKAKKSKATNWVEALVNLLEKRLDNVVFRLGFASSIPAARQLVSHGKVLVNGKKVNIGSQIIKVGDKITLKDEAYQNQVYMAAKQAPRLPLPSFMAKEDVAGKEQGRLTDEPNLEAVPFAFEPGLVIGYYSMRG</sequence>
<organism>
    <name type="scientific">Bdellovibrio bacteriovorus (strain ATCC 15356 / DSM 50701 / NCIMB 9529 / HD100)</name>
    <dbReference type="NCBI Taxonomy" id="264462"/>
    <lineage>
        <taxon>Bacteria</taxon>
        <taxon>Pseudomonadati</taxon>
        <taxon>Bdellovibrionota</taxon>
        <taxon>Bdellovibrionia</taxon>
        <taxon>Bdellovibrionales</taxon>
        <taxon>Pseudobdellovibrionaceae</taxon>
        <taxon>Bdellovibrio</taxon>
    </lineage>
</organism>
<name>RS4B_BDEBA</name>